<feature type="chain" id="PRO_1000075332" description="Peptidyl-tRNA hydrolase">
    <location>
        <begin position="1"/>
        <end position="188"/>
    </location>
</feature>
<feature type="active site" description="Proton acceptor" evidence="1">
    <location>
        <position position="19"/>
    </location>
</feature>
<feature type="binding site" evidence="1">
    <location>
        <position position="14"/>
    </location>
    <ligand>
        <name>tRNA</name>
        <dbReference type="ChEBI" id="CHEBI:17843"/>
    </ligand>
</feature>
<feature type="binding site" evidence="1">
    <location>
        <position position="64"/>
    </location>
    <ligand>
        <name>tRNA</name>
        <dbReference type="ChEBI" id="CHEBI:17843"/>
    </ligand>
</feature>
<feature type="binding site" evidence="1">
    <location>
        <position position="66"/>
    </location>
    <ligand>
        <name>tRNA</name>
        <dbReference type="ChEBI" id="CHEBI:17843"/>
    </ligand>
</feature>
<feature type="binding site" evidence="1">
    <location>
        <position position="113"/>
    </location>
    <ligand>
        <name>tRNA</name>
        <dbReference type="ChEBI" id="CHEBI:17843"/>
    </ligand>
</feature>
<feature type="site" description="Discriminates between blocked and unblocked aminoacyl-tRNA" evidence="1">
    <location>
        <position position="9"/>
    </location>
</feature>
<feature type="site" description="Stabilizes the basic form of H active site to accept a proton" evidence="1">
    <location>
        <position position="92"/>
    </location>
</feature>
<accession>A9WBS1</accession>
<gene>
    <name evidence="1" type="primary">pth</name>
    <name type="ordered locus">Caur_1660</name>
</gene>
<evidence type="ECO:0000255" key="1">
    <source>
        <dbReference type="HAMAP-Rule" id="MF_00083"/>
    </source>
</evidence>
<reference key="1">
    <citation type="journal article" date="2011" name="BMC Genomics">
        <title>Complete genome sequence of the filamentous anoxygenic phototrophic bacterium Chloroflexus aurantiacus.</title>
        <authorList>
            <person name="Tang K.H."/>
            <person name="Barry K."/>
            <person name="Chertkov O."/>
            <person name="Dalin E."/>
            <person name="Han C.S."/>
            <person name="Hauser L.J."/>
            <person name="Honchak B.M."/>
            <person name="Karbach L.E."/>
            <person name="Land M.L."/>
            <person name="Lapidus A."/>
            <person name="Larimer F.W."/>
            <person name="Mikhailova N."/>
            <person name="Pitluck S."/>
            <person name="Pierson B.K."/>
            <person name="Blankenship R.E."/>
        </authorList>
    </citation>
    <scope>NUCLEOTIDE SEQUENCE [LARGE SCALE GENOMIC DNA]</scope>
    <source>
        <strain>ATCC 29366 / DSM 635 / J-10-fl</strain>
    </source>
</reference>
<protein>
    <recommendedName>
        <fullName evidence="1">Peptidyl-tRNA hydrolase</fullName>
        <shortName evidence="1">Pth</shortName>
        <ecNumber evidence="1">3.1.1.29</ecNumber>
    </recommendedName>
</protein>
<comment type="function">
    <text evidence="1">Hydrolyzes ribosome-free peptidyl-tRNAs (with 1 or more amino acids incorporated), which drop off the ribosome during protein synthesis, or as a result of ribosome stalling.</text>
</comment>
<comment type="function">
    <text evidence="1">Catalyzes the release of premature peptidyl moieties from peptidyl-tRNA molecules trapped in stalled 50S ribosomal subunits, and thus maintains levels of free tRNAs and 50S ribosomes.</text>
</comment>
<comment type="catalytic activity">
    <reaction evidence="1">
        <text>an N-acyl-L-alpha-aminoacyl-tRNA + H2O = an N-acyl-L-amino acid + a tRNA + H(+)</text>
        <dbReference type="Rhea" id="RHEA:54448"/>
        <dbReference type="Rhea" id="RHEA-COMP:10123"/>
        <dbReference type="Rhea" id="RHEA-COMP:13883"/>
        <dbReference type="ChEBI" id="CHEBI:15377"/>
        <dbReference type="ChEBI" id="CHEBI:15378"/>
        <dbReference type="ChEBI" id="CHEBI:59874"/>
        <dbReference type="ChEBI" id="CHEBI:78442"/>
        <dbReference type="ChEBI" id="CHEBI:138191"/>
        <dbReference type="EC" id="3.1.1.29"/>
    </reaction>
</comment>
<comment type="subunit">
    <text evidence="1">Monomer.</text>
</comment>
<comment type="subcellular location">
    <subcellularLocation>
        <location evidence="1">Cytoplasm</location>
    </subcellularLocation>
</comment>
<comment type="similarity">
    <text evidence="1">Belongs to the PTH family.</text>
</comment>
<name>PTH_CHLAA</name>
<organism>
    <name type="scientific">Chloroflexus aurantiacus (strain ATCC 29366 / DSM 635 / J-10-fl)</name>
    <dbReference type="NCBI Taxonomy" id="324602"/>
    <lineage>
        <taxon>Bacteria</taxon>
        <taxon>Bacillati</taxon>
        <taxon>Chloroflexota</taxon>
        <taxon>Chloroflexia</taxon>
        <taxon>Chloroflexales</taxon>
        <taxon>Chloroflexineae</taxon>
        <taxon>Chloroflexaceae</taxon>
        <taxon>Chloroflexus</taxon>
    </lineage>
</organism>
<keyword id="KW-0963">Cytoplasm</keyword>
<keyword id="KW-0378">Hydrolase</keyword>
<keyword id="KW-1185">Reference proteome</keyword>
<keyword id="KW-0694">RNA-binding</keyword>
<keyword id="KW-0820">tRNA-binding</keyword>
<sequence>MWLIVGLGNPGERYARTRHNIGFRSVDTLAERHGLTFRPQRANSQLAEGNIYGQRVVLAKPQTYMNLSGQAVVALCNWYKIDPARELLVIYDDLDLPFAKLRIRERGSAGTHNGMRSIVAQLGTTEFPRLRVGIGQPPGKMDAADYVLGRFTPDEEAALPDLLGRIADAVEVILREGLTTAMNRYNPL</sequence>
<dbReference type="EC" id="3.1.1.29" evidence="1"/>
<dbReference type="EMBL" id="CP000909">
    <property type="protein sequence ID" value="ABY34878.1"/>
    <property type="molecule type" value="Genomic_DNA"/>
</dbReference>
<dbReference type="RefSeq" id="WP_012257532.1">
    <property type="nucleotide sequence ID" value="NC_010175.1"/>
</dbReference>
<dbReference type="RefSeq" id="YP_001635267.1">
    <property type="nucleotide sequence ID" value="NC_010175.1"/>
</dbReference>
<dbReference type="SMR" id="A9WBS1"/>
<dbReference type="FunCoup" id="A9WBS1">
    <property type="interactions" value="421"/>
</dbReference>
<dbReference type="STRING" id="324602.Caur_1660"/>
<dbReference type="EnsemblBacteria" id="ABY34878">
    <property type="protein sequence ID" value="ABY34878"/>
    <property type="gene ID" value="Caur_1660"/>
</dbReference>
<dbReference type="KEGG" id="cau:Caur_1660"/>
<dbReference type="PATRIC" id="fig|324602.8.peg.1899"/>
<dbReference type="eggNOG" id="COG0193">
    <property type="taxonomic scope" value="Bacteria"/>
</dbReference>
<dbReference type="HOGENOM" id="CLU_062456_4_1_0"/>
<dbReference type="InParanoid" id="A9WBS1"/>
<dbReference type="Proteomes" id="UP000002008">
    <property type="component" value="Chromosome"/>
</dbReference>
<dbReference type="GO" id="GO:0005737">
    <property type="term" value="C:cytoplasm"/>
    <property type="evidence" value="ECO:0007669"/>
    <property type="project" value="UniProtKB-SubCell"/>
</dbReference>
<dbReference type="GO" id="GO:0004045">
    <property type="term" value="F:peptidyl-tRNA hydrolase activity"/>
    <property type="evidence" value="ECO:0000318"/>
    <property type="project" value="GO_Central"/>
</dbReference>
<dbReference type="GO" id="GO:0000049">
    <property type="term" value="F:tRNA binding"/>
    <property type="evidence" value="ECO:0007669"/>
    <property type="project" value="UniProtKB-UniRule"/>
</dbReference>
<dbReference type="GO" id="GO:0006515">
    <property type="term" value="P:protein quality control for misfolded or incompletely synthesized proteins"/>
    <property type="evidence" value="ECO:0007669"/>
    <property type="project" value="UniProtKB-UniRule"/>
</dbReference>
<dbReference type="GO" id="GO:0072344">
    <property type="term" value="P:rescue of stalled ribosome"/>
    <property type="evidence" value="ECO:0007669"/>
    <property type="project" value="UniProtKB-UniRule"/>
</dbReference>
<dbReference type="CDD" id="cd00462">
    <property type="entry name" value="PTH"/>
    <property type="match status" value="1"/>
</dbReference>
<dbReference type="FunFam" id="3.40.50.1470:FF:000001">
    <property type="entry name" value="Peptidyl-tRNA hydrolase"/>
    <property type="match status" value="1"/>
</dbReference>
<dbReference type="Gene3D" id="3.40.50.1470">
    <property type="entry name" value="Peptidyl-tRNA hydrolase"/>
    <property type="match status" value="1"/>
</dbReference>
<dbReference type="HAMAP" id="MF_00083">
    <property type="entry name" value="Pept_tRNA_hydro_bact"/>
    <property type="match status" value="1"/>
</dbReference>
<dbReference type="InterPro" id="IPR001328">
    <property type="entry name" value="Pept_tRNA_hydro"/>
</dbReference>
<dbReference type="InterPro" id="IPR018171">
    <property type="entry name" value="Pept_tRNA_hydro_CS"/>
</dbReference>
<dbReference type="InterPro" id="IPR036416">
    <property type="entry name" value="Pept_tRNA_hydro_sf"/>
</dbReference>
<dbReference type="NCBIfam" id="TIGR00447">
    <property type="entry name" value="pth"/>
    <property type="match status" value="1"/>
</dbReference>
<dbReference type="PANTHER" id="PTHR17224">
    <property type="entry name" value="PEPTIDYL-TRNA HYDROLASE"/>
    <property type="match status" value="1"/>
</dbReference>
<dbReference type="PANTHER" id="PTHR17224:SF1">
    <property type="entry name" value="PEPTIDYL-TRNA HYDROLASE"/>
    <property type="match status" value="1"/>
</dbReference>
<dbReference type="Pfam" id="PF01195">
    <property type="entry name" value="Pept_tRNA_hydro"/>
    <property type="match status" value="1"/>
</dbReference>
<dbReference type="SUPFAM" id="SSF53178">
    <property type="entry name" value="Peptidyl-tRNA hydrolase-like"/>
    <property type="match status" value="1"/>
</dbReference>
<dbReference type="PROSITE" id="PS01196">
    <property type="entry name" value="PEPT_TRNA_HYDROL_2"/>
    <property type="match status" value="1"/>
</dbReference>
<proteinExistence type="inferred from homology"/>